<reference key="1">
    <citation type="journal article" date="2007" name="Genes Dev.">
        <title>New insights into Acinetobacter baumannii pathogenesis revealed by high-density pyrosequencing and transposon mutagenesis.</title>
        <authorList>
            <person name="Smith M.G."/>
            <person name="Gianoulis T.A."/>
            <person name="Pukatzki S."/>
            <person name="Mekalanos J.J."/>
            <person name="Ornston L.N."/>
            <person name="Gerstein M."/>
            <person name="Snyder M."/>
        </authorList>
    </citation>
    <scope>NUCLEOTIDE SEQUENCE [LARGE SCALE GENOMIC DNA]</scope>
    <source>
        <strain>ATCC 17978 / DSM 105126 / CIP 53.77 / LMG 1025 / NCDC KC755 / 5377</strain>
    </source>
</reference>
<name>COBS_ACIBT</name>
<dbReference type="EC" id="2.7.8.26" evidence="1"/>
<dbReference type="EMBL" id="CP000521">
    <property type="protein sequence ID" value="ABO12090.2"/>
    <property type="molecule type" value="Genomic_DNA"/>
</dbReference>
<dbReference type="RefSeq" id="WP_000187500.1">
    <property type="nucleotide sequence ID" value="NZ_CP053098.1"/>
</dbReference>
<dbReference type="KEGG" id="acb:A1S_1663"/>
<dbReference type="HOGENOM" id="CLU_057426_3_1_6"/>
<dbReference type="UniPathway" id="UPA00148">
    <property type="reaction ID" value="UER00238"/>
</dbReference>
<dbReference type="GO" id="GO:0005886">
    <property type="term" value="C:plasma membrane"/>
    <property type="evidence" value="ECO:0007669"/>
    <property type="project" value="UniProtKB-SubCell"/>
</dbReference>
<dbReference type="GO" id="GO:0051073">
    <property type="term" value="F:adenosylcobinamide-GDP ribazoletransferase activity"/>
    <property type="evidence" value="ECO:0007669"/>
    <property type="project" value="UniProtKB-UniRule"/>
</dbReference>
<dbReference type="GO" id="GO:0008818">
    <property type="term" value="F:cobalamin 5'-phosphate synthase activity"/>
    <property type="evidence" value="ECO:0007669"/>
    <property type="project" value="UniProtKB-UniRule"/>
</dbReference>
<dbReference type="GO" id="GO:0009236">
    <property type="term" value="P:cobalamin biosynthetic process"/>
    <property type="evidence" value="ECO:0007669"/>
    <property type="project" value="UniProtKB-UniRule"/>
</dbReference>
<dbReference type="HAMAP" id="MF_00719">
    <property type="entry name" value="CobS"/>
    <property type="match status" value="1"/>
</dbReference>
<dbReference type="InterPro" id="IPR003805">
    <property type="entry name" value="CobS"/>
</dbReference>
<dbReference type="NCBIfam" id="TIGR00317">
    <property type="entry name" value="cobS"/>
    <property type="match status" value="1"/>
</dbReference>
<dbReference type="NCBIfam" id="NF001278">
    <property type="entry name" value="PRK00235.1-5"/>
    <property type="match status" value="1"/>
</dbReference>
<dbReference type="PANTHER" id="PTHR34148">
    <property type="entry name" value="ADENOSYLCOBINAMIDE-GDP RIBAZOLETRANSFERASE"/>
    <property type="match status" value="1"/>
</dbReference>
<dbReference type="PANTHER" id="PTHR34148:SF1">
    <property type="entry name" value="ADENOSYLCOBINAMIDE-GDP RIBAZOLETRANSFERASE"/>
    <property type="match status" value="1"/>
</dbReference>
<dbReference type="Pfam" id="PF02654">
    <property type="entry name" value="CobS"/>
    <property type="match status" value="1"/>
</dbReference>
<keyword id="KW-0997">Cell inner membrane</keyword>
<keyword id="KW-1003">Cell membrane</keyword>
<keyword id="KW-0169">Cobalamin biosynthesis</keyword>
<keyword id="KW-0460">Magnesium</keyword>
<keyword id="KW-0472">Membrane</keyword>
<keyword id="KW-0808">Transferase</keyword>
<keyword id="KW-0812">Transmembrane</keyword>
<keyword id="KW-1133">Transmembrane helix</keyword>
<sequence length="247" mass="27192">MTPFWIALQFLTVLPIELKTIPTAQQNGRAILFYPLVGLIIGGILFLVTCIFVKLPALLLAAIVLALWIWLTGGLHLDGLADTADAWVGGFGDKLRTLQIMKDPSCGPIGVLSLVIICLLKFALVYVLIEQHQSLFLICIPILGRVVPSILFLTTPYVREKGLGRSLTDHLPKTASWIITGFVLLLPLYWGWQGLIAIIGFLISLVYLRHVFIKRIGGITGDTVGAAIEIGETVLMFTFVVSYFYLV</sequence>
<feature type="chain" id="PRO_1000132557" description="Adenosylcobinamide-GDP ribazoletransferase">
    <location>
        <begin position="1"/>
        <end position="247"/>
    </location>
</feature>
<feature type="transmembrane region" description="Helical" evidence="1">
    <location>
        <begin position="31"/>
        <end position="51"/>
    </location>
</feature>
<feature type="transmembrane region" description="Helical" evidence="1">
    <location>
        <begin position="55"/>
        <end position="75"/>
    </location>
</feature>
<feature type="transmembrane region" description="Helical" evidence="1">
    <location>
        <begin position="109"/>
        <end position="129"/>
    </location>
</feature>
<feature type="transmembrane region" description="Helical" evidence="1">
    <location>
        <begin position="135"/>
        <end position="155"/>
    </location>
</feature>
<feature type="transmembrane region" description="Helical" evidence="1">
    <location>
        <begin position="183"/>
        <end position="203"/>
    </location>
</feature>
<feature type="transmembrane region" description="Helical" evidence="1">
    <location>
        <begin position="227"/>
        <end position="247"/>
    </location>
</feature>
<protein>
    <recommendedName>
        <fullName evidence="1">Adenosylcobinamide-GDP ribazoletransferase</fullName>
        <ecNumber evidence="1">2.7.8.26</ecNumber>
    </recommendedName>
    <alternativeName>
        <fullName evidence="1">Cobalamin synthase</fullName>
    </alternativeName>
    <alternativeName>
        <fullName evidence="1">Cobalamin-5'-phosphate synthase</fullName>
    </alternativeName>
</protein>
<evidence type="ECO:0000255" key="1">
    <source>
        <dbReference type="HAMAP-Rule" id="MF_00719"/>
    </source>
</evidence>
<comment type="function">
    <text evidence="1">Joins adenosylcobinamide-GDP and alpha-ribazole to generate adenosylcobalamin (Ado-cobalamin). Also synthesizes adenosylcobalamin 5'-phosphate from adenosylcobinamide-GDP and alpha-ribazole 5'-phosphate.</text>
</comment>
<comment type="catalytic activity">
    <reaction evidence="1">
        <text>alpha-ribazole + adenosylcob(III)inamide-GDP = adenosylcob(III)alamin + GMP + H(+)</text>
        <dbReference type="Rhea" id="RHEA:16049"/>
        <dbReference type="ChEBI" id="CHEBI:10329"/>
        <dbReference type="ChEBI" id="CHEBI:15378"/>
        <dbReference type="ChEBI" id="CHEBI:18408"/>
        <dbReference type="ChEBI" id="CHEBI:58115"/>
        <dbReference type="ChEBI" id="CHEBI:60487"/>
        <dbReference type="EC" id="2.7.8.26"/>
    </reaction>
</comment>
<comment type="catalytic activity">
    <reaction evidence="1">
        <text>alpha-ribazole 5'-phosphate + adenosylcob(III)inamide-GDP = adenosylcob(III)alamin 5'-phosphate + GMP + H(+)</text>
        <dbReference type="Rhea" id="RHEA:23560"/>
        <dbReference type="ChEBI" id="CHEBI:15378"/>
        <dbReference type="ChEBI" id="CHEBI:57918"/>
        <dbReference type="ChEBI" id="CHEBI:58115"/>
        <dbReference type="ChEBI" id="CHEBI:60487"/>
        <dbReference type="ChEBI" id="CHEBI:60493"/>
        <dbReference type="EC" id="2.7.8.26"/>
    </reaction>
</comment>
<comment type="cofactor">
    <cofactor evidence="1">
        <name>Mg(2+)</name>
        <dbReference type="ChEBI" id="CHEBI:18420"/>
    </cofactor>
</comment>
<comment type="pathway">
    <text evidence="1">Cofactor biosynthesis; adenosylcobalamin biosynthesis; adenosylcobalamin from cob(II)yrinate a,c-diamide: step 7/7.</text>
</comment>
<comment type="subcellular location">
    <subcellularLocation>
        <location evidence="1">Cell inner membrane</location>
        <topology evidence="1">Multi-pass membrane protein</topology>
    </subcellularLocation>
</comment>
<comment type="similarity">
    <text evidence="1">Belongs to the CobS family.</text>
</comment>
<organism>
    <name type="scientific">Acinetobacter baumannii (strain ATCC 17978 / DSM 105126 / CIP 53.77 / LMG 1025 / NCDC KC755 / 5377)</name>
    <dbReference type="NCBI Taxonomy" id="400667"/>
    <lineage>
        <taxon>Bacteria</taxon>
        <taxon>Pseudomonadati</taxon>
        <taxon>Pseudomonadota</taxon>
        <taxon>Gammaproteobacteria</taxon>
        <taxon>Moraxellales</taxon>
        <taxon>Moraxellaceae</taxon>
        <taxon>Acinetobacter</taxon>
        <taxon>Acinetobacter calcoaceticus/baumannii complex</taxon>
    </lineage>
</organism>
<proteinExistence type="inferred from homology"/>
<gene>
    <name evidence="1" type="primary">cobS</name>
    <name type="ordered locus">A1S_1663</name>
</gene>
<accession>A3M596</accession>